<keyword id="KW-1185">Reference proteome</keyword>
<protein>
    <recommendedName>
        <fullName evidence="1">UPF0280 protein AF_0649</fullName>
    </recommendedName>
</protein>
<feature type="chain" id="PRO_0000140484" description="UPF0280 protein AF_0649">
    <location>
        <begin position="1"/>
        <end position="233"/>
    </location>
</feature>
<organism>
    <name type="scientific">Archaeoglobus fulgidus (strain ATCC 49558 / DSM 4304 / JCM 9628 / NBRC 100126 / VC-16)</name>
    <dbReference type="NCBI Taxonomy" id="224325"/>
    <lineage>
        <taxon>Archaea</taxon>
        <taxon>Methanobacteriati</taxon>
        <taxon>Methanobacteriota</taxon>
        <taxon>Archaeoglobi</taxon>
        <taxon>Archaeoglobales</taxon>
        <taxon>Archaeoglobaceae</taxon>
        <taxon>Archaeoglobus</taxon>
    </lineage>
</organism>
<sequence>MRRFKFQYKETIVTILTENEEFYKTAVKAILEARSEIEDYILHNPDFFTSYEPIECSGGEIINRMCNAAKIAGVGPMAAVAGTIAAYAVEKMIDAGAKLAVVDNGGDIVIHSDRELLVGIYPSKLAFKVPPVDYLAICTSSGKIGHSVSFGKADAATVVARDASVADALATALGNLIGDFGKKELEKTVSEFYGKYSDFVEGILVVKDELVALAGNLPSLAFAESKEDLITKG</sequence>
<dbReference type="EMBL" id="AE000782">
    <property type="protein sequence ID" value="AAB90589.1"/>
    <property type="molecule type" value="Genomic_DNA"/>
</dbReference>
<dbReference type="PIR" id="A69331">
    <property type="entry name" value="A69331"/>
</dbReference>
<dbReference type="RefSeq" id="WP_010878152.1">
    <property type="nucleotide sequence ID" value="NC_000917.1"/>
</dbReference>
<dbReference type="SMR" id="O29608"/>
<dbReference type="STRING" id="224325.AF_0649"/>
<dbReference type="PaxDb" id="224325-AF_0649"/>
<dbReference type="EnsemblBacteria" id="AAB90589">
    <property type="protein sequence ID" value="AAB90589"/>
    <property type="gene ID" value="AF_0649"/>
</dbReference>
<dbReference type="GeneID" id="1483867"/>
<dbReference type="KEGG" id="afu:AF_0649"/>
<dbReference type="eggNOG" id="arCOG04376">
    <property type="taxonomic scope" value="Archaea"/>
</dbReference>
<dbReference type="HOGENOM" id="CLU_074757_0_0_2"/>
<dbReference type="OrthoDB" id="50299at2157"/>
<dbReference type="PhylomeDB" id="O29608"/>
<dbReference type="Proteomes" id="UP000002199">
    <property type="component" value="Chromosome"/>
</dbReference>
<dbReference type="Gene3D" id="3.10.520.10">
    <property type="entry name" value="ApbE-like domains"/>
    <property type="match status" value="1"/>
</dbReference>
<dbReference type="HAMAP" id="MF_01079">
    <property type="entry name" value="UPF0280"/>
    <property type="match status" value="1"/>
</dbReference>
<dbReference type="InterPro" id="IPR003374">
    <property type="entry name" value="ApbE-like_sf"/>
</dbReference>
<dbReference type="InterPro" id="IPR037456">
    <property type="entry name" value="MA1715-like"/>
</dbReference>
<dbReference type="InterPro" id="IPR007183">
    <property type="entry name" value="UPF0280"/>
</dbReference>
<dbReference type="NCBIfam" id="NF003324">
    <property type="entry name" value="PRK04334.1-4"/>
    <property type="match status" value="1"/>
</dbReference>
<dbReference type="PIRSF" id="PIRSF006421">
    <property type="entry name" value="UCP006421"/>
    <property type="match status" value="1"/>
</dbReference>
<dbReference type="SUPFAM" id="SSF143631">
    <property type="entry name" value="ApbE-like"/>
    <property type="match status" value="1"/>
</dbReference>
<name>Y649_ARCFU</name>
<accession>O29608</accession>
<evidence type="ECO:0000255" key="1">
    <source>
        <dbReference type="HAMAP-Rule" id="MF_01079"/>
    </source>
</evidence>
<comment type="similarity">
    <text evidence="1">Belongs to the UPF0280 family.</text>
</comment>
<reference key="1">
    <citation type="journal article" date="1997" name="Nature">
        <title>The complete genome sequence of the hyperthermophilic, sulphate-reducing archaeon Archaeoglobus fulgidus.</title>
        <authorList>
            <person name="Klenk H.-P."/>
            <person name="Clayton R.A."/>
            <person name="Tomb J.-F."/>
            <person name="White O."/>
            <person name="Nelson K.E."/>
            <person name="Ketchum K.A."/>
            <person name="Dodson R.J."/>
            <person name="Gwinn M.L."/>
            <person name="Hickey E.K."/>
            <person name="Peterson J.D."/>
            <person name="Richardson D.L."/>
            <person name="Kerlavage A.R."/>
            <person name="Graham D.E."/>
            <person name="Kyrpides N.C."/>
            <person name="Fleischmann R.D."/>
            <person name="Quackenbush J."/>
            <person name="Lee N.H."/>
            <person name="Sutton G.G."/>
            <person name="Gill S.R."/>
            <person name="Kirkness E.F."/>
            <person name="Dougherty B.A."/>
            <person name="McKenney K."/>
            <person name="Adams M.D."/>
            <person name="Loftus B.J."/>
            <person name="Peterson S.N."/>
            <person name="Reich C.I."/>
            <person name="McNeil L.K."/>
            <person name="Badger J.H."/>
            <person name="Glodek A."/>
            <person name="Zhou L."/>
            <person name="Overbeek R."/>
            <person name="Gocayne J.D."/>
            <person name="Weidman J.F."/>
            <person name="McDonald L.A."/>
            <person name="Utterback T.R."/>
            <person name="Cotton M.D."/>
            <person name="Spriggs T."/>
            <person name="Artiach P."/>
            <person name="Kaine B.P."/>
            <person name="Sykes S.M."/>
            <person name="Sadow P.W."/>
            <person name="D'Andrea K.P."/>
            <person name="Bowman C."/>
            <person name="Fujii C."/>
            <person name="Garland S.A."/>
            <person name="Mason T.M."/>
            <person name="Olsen G.J."/>
            <person name="Fraser C.M."/>
            <person name="Smith H.O."/>
            <person name="Woese C.R."/>
            <person name="Venter J.C."/>
        </authorList>
    </citation>
    <scope>NUCLEOTIDE SEQUENCE [LARGE SCALE GENOMIC DNA]</scope>
    <source>
        <strain>ATCC 49558 / DSM 4304 / JCM 9628 / NBRC 100126 / VC-16</strain>
    </source>
</reference>
<proteinExistence type="inferred from homology"/>
<gene>
    <name type="ordered locus">AF_0649</name>
</gene>